<name>PEPT_SHIFL</name>
<dbReference type="EC" id="3.4.11.4" evidence="1"/>
<dbReference type="EMBL" id="AE005674">
    <property type="protein sequence ID" value="AAN42747.2"/>
    <property type="molecule type" value="Genomic_DNA"/>
</dbReference>
<dbReference type="EMBL" id="AE014073">
    <property type="protein sequence ID" value="AAP16636.1"/>
    <property type="molecule type" value="Genomic_DNA"/>
</dbReference>
<dbReference type="RefSeq" id="NP_707040.2">
    <property type="nucleotide sequence ID" value="NC_004337.2"/>
</dbReference>
<dbReference type="RefSeq" id="WP_000359445.1">
    <property type="nucleotide sequence ID" value="NZ_WPGW01000001.1"/>
</dbReference>
<dbReference type="SMR" id="Q83RR6"/>
<dbReference type="STRING" id="198214.SF1129"/>
<dbReference type="MEROPS" id="M20.003"/>
<dbReference type="PaxDb" id="198214-SF1129"/>
<dbReference type="GeneID" id="1024052"/>
<dbReference type="KEGG" id="sfl:SF1129"/>
<dbReference type="KEGG" id="sfx:S1209"/>
<dbReference type="PATRIC" id="fig|198214.7.peg.1320"/>
<dbReference type="HOGENOM" id="CLU_053676_0_0_6"/>
<dbReference type="Proteomes" id="UP000001006">
    <property type="component" value="Chromosome"/>
</dbReference>
<dbReference type="Proteomes" id="UP000002673">
    <property type="component" value="Chromosome"/>
</dbReference>
<dbReference type="GO" id="GO:0005829">
    <property type="term" value="C:cytosol"/>
    <property type="evidence" value="ECO:0007669"/>
    <property type="project" value="TreeGrafter"/>
</dbReference>
<dbReference type="GO" id="GO:0008237">
    <property type="term" value="F:metallopeptidase activity"/>
    <property type="evidence" value="ECO:0007669"/>
    <property type="project" value="UniProtKB-KW"/>
</dbReference>
<dbReference type="GO" id="GO:0045148">
    <property type="term" value="F:tripeptide aminopeptidase activity"/>
    <property type="evidence" value="ECO:0007669"/>
    <property type="project" value="UniProtKB-UniRule"/>
</dbReference>
<dbReference type="GO" id="GO:0008270">
    <property type="term" value="F:zinc ion binding"/>
    <property type="evidence" value="ECO:0007669"/>
    <property type="project" value="UniProtKB-UniRule"/>
</dbReference>
<dbReference type="GO" id="GO:0043171">
    <property type="term" value="P:peptide catabolic process"/>
    <property type="evidence" value="ECO:0007669"/>
    <property type="project" value="UniProtKB-UniRule"/>
</dbReference>
<dbReference type="GO" id="GO:0006508">
    <property type="term" value="P:proteolysis"/>
    <property type="evidence" value="ECO:0007669"/>
    <property type="project" value="UniProtKB-UniRule"/>
</dbReference>
<dbReference type="CDD" id="cd03892">
    <property type="entry name" value="M20_peptT"/>
    <property type="match status" value="1"/>
</dbReference>
<dbReference type="FunFam" id="3.30.70.360:FF:000002">
    <property type="entry name" value="Peptidase T"/>
    <property type="match status" value="1"/>
</dbReference>
<dbReference type="Gene3D" id="3.30.70.360">
    <property type="match status" value="1"/>
</dbReference>
<dbReference type="Gene3D" id="3.40.630.10">
    <property type="entry name" value="Zn peptidases"/>
    <property type="match status" value="1"/>
</dbReference>
<dbReference type="HAMAP" id="MF_00550">
    <property type="entry name" value="Aminopeptidase_M20"/>
    <property type="match status" value="1"/>
</dbReference>
<dbReference type="InterPro" id="IPR001261">
    <property type="entry name" value="ArgE/DapE_CS"/>
</dbReference>
<dbReference type="InterPro" id="IPR036264">
    <property type="entry name" value="Bact_exopeptidase_dim_dom"/>
</dbReference>
<dbReference type="InterPro" id="IPR002933">
    <property type="entry name" value="Peptidase_M20"/>
</dbReference>
<dbReference type="InterPro" id="IPR011650">
    <property type="entry name" value="Peptidase_M20_dimer"/>
</dbReference>
<dbReference type="InterPro" id="IPR010161">
    <property type="entry name" value="Peptidase_M20B"/>
</dbReference>
<dbReference type="NCBIfam" id="TIGR01882">
    <property type="entry name" value="peptidase-T"/>
    <property type="match status" value="1"/>
</dbReference>
<dbReference type="NCBIfam" id="NF003976">
    <property type="entry name" value="PRK05469.1"/>
    <property type="match status" value="1"/>
</dbReference>
<dbReference type="NCBIfam" id="NF009920">
    <property type="entry name" value="PRK13381.1"/>
    <property type="match status" value="1"/>
</dbReference>
<dbReference type="PANTHER" id="PTHR42994">
    <property type="entry name" value="PEPTIDASE T"/>
    <property type="match status" value="1"/>
</dbReference>
<dbReference type="PANTHER" id="PTHR42994:SF1">
    <property type="entry name" value="PEPTIDASE T"/>
    <property type="match status" value="1"/>
</dbReference>
<dbReference type="Pfam" id="PF07687">
    <property type="entry name" value="M20_dimer"/>
    <property type="match status" value="1"/>
</dbReference>
<dbReference type="Pfam" id="PF01546">
    <property type="entry name" value="Peptidase_M20"/>
    <property type="match status" value="1"/>
</dbReference>
<dbReference type="PIRSF" id="PIRSF037215">
    <property type="entry name" value="Peptidase_M20B"/>
    <property type="match status" value="1"/>
</dbReference>
<dbReference type="SUPFAM" id="SSF55031">
    <property type="entry name" value="Bacterial exopeptidase dimerisation domain"/>
    <property type="match status" value="1"/>
</dbReference>
<dbReference type="SUPFAM" id="SSF53187">
    <property type="entry name" value="Zn-dependent exopeptidases"/>
    <property type="match status" value="1"/>
</dbReference>
<dbReference type="PROSITE" id="PS00758">
    <property type="entry name" value="ARGE_DAPE_CPG2_1"/>
    <property type="match status" value="1"/>
</dbReference>
<dbReference type="PROSITE" id="PS00759">
    <property type="entry name" value="ARGE_DAPE_CPG2_2"/>
    <property type="match status" value="1"/>
</dbReference>
<keyword id="KW-0031">Aminopeptidase</keyword>
<keyword id="KW-0963">Cytoplasm</keyword>
<keyword id="KW-0378">Hydrolase</keyword>
<keyword id="KW-0479">Metal-binding</keyword>
<keyword id="KW-0482">Metalloprotease</keyword>
<keyword id="KW-0645">Protease</keyword>
<keyword id="KW-1185">Reference proteome</keyword>
<keyword id="KW-0862">Zinc</keyword>
<evidence type="ECO:0000255" key="1">
    <source>
        <dbReference type="HAMAP-Rule" id="MF_00550"/>
    </source>
</evidence>
<proteinExistence type="inferred from homology"/>
<protein>
    <recommendedName>
        <fullName evidence="1">Peptidase T</fullName>
        <ecNumber evidence="1">3.4.11.4</ecNumber>
    </recommendedName>
    <alternativeName>
        <fullName evidence="1">Aminotripeptidase</fullName>
        <shortName evidence="1">Tripeptidase</shortName>
    </alternativeName>
    <alternativeName>
        <fullName evidence="1">Tripeptide aminopeptidase</fullName>
    </alternativeName>
</protein>
<gene>
    <name evidence="1" type="primary">pepT</name>
    <name type="ordered locus">SF1129</name>
    <name type="ordered locus">S1209</name>
</gene>
<reference key="1">
    <citation type="journal article" date="2002" name="Nucleic Acids Res.">
        <title>Genome sequence of Shigella flexneri 2a: insights into pathogenicity through comparison with genomes of Escherichia coli K12 and O157.</title>
        <authorList>
            <person name="Jin Q."/>
            <person name="Yuan Z."/>
            <person name="Xu J."/>
            <person name="Wang Y."/>
            <person name="Shen Y."/>
            <person name="Lu W."/>
            <person name="Wang J."/>
            <person name="Liu H."/>
            <person name="Yang J."/>
            <person name="Yang F."/>
            <person name="Zhang X."/>
            <person name="Zhang J."/>
            <person name="Yang G."/>
            <person name="Wu H."/>
            <person name="Qu D."/>
            <person name="Dong J."/>
            <person name="Sun L."/>
            <person name="Xue Y."/>
            <person name="Zhao A."/>
            <person name="Gao Y."/>
            <person name="Zhu J."/>
            <person name="Kan B."/>
            <person name="Ding K."/>
            <person name="Chen S."/>
            <person name="Cheng H."/>
            <person name="Yao Z."/>
            <person name="He B."/>
            <person name="Chen R."/>
            <person name="Ma D."/>
            <person name="Qiang B."/>
            <person name="Wen Y."/>
            <person name="Hou Y."/>
            <person name="Yu J."/>
        </authorList>
    </citation>
    <scope>NUCLEOTIDE SEQUENCE [LARGE SCALE GENOMIC DNA]</scope>
    <source>
        <strain>301 / Serotype 2a</strain>
    </source>
</reference>
<reference key="2">
    <citation type="journal article" date="2003" name="Infect. Immun.">
        <title>Complete genome sequence and comparative genomics of Shigella flexneri serotype 2a strain 2457T.</title>
        <authorList>
            <person name="Wei J."/>
            <person name="Goldberg M.B."/>
            <person name="Burland V."/>
            <person name="Venkatesan M.M."/>
            <person name="Deng W."/>
            <person name="Fournier G."/>
            <person name="Mayhew G.F."/>
            <person name="Plunkett G. III"/>
            <person name="Rose D.J."/>
            <person name="Darling A."/>
            <person name="Mau B."/>
            <person name="Perna N.T."/>
            <person name="Payne S.M."/>
            <person name="Runyen-Janecky L.J."/>
            <person name="Zhou S."/>
            <person name="Schwartz D.C."/>
            <person name="Blattner F.R."/>
        </authorList>
    </citation>
    <scope>NUCLEOTIDE SEQUENCE [LARGE SCALE GENOMIC DNA]</scope>
    <source>
        <strain>ATCC 700930 / 2457T / Serotype 2a</strain>
    </source>
</reference>
<feature type="chain" id="PRO_1000017851" description="Peptidase T">
    <location>
        <begin position="1"/>
        <end position="408"/>
    </location>
</feature>
<feature type="active site" evidence="1">
    <location>
        <position position="80"/>
    </location>
</feature>
<feature type="active site" description="Proton acceptor" evidence="1">
    <location>
        <position position="173"/>
    </location>
</feature>
<feature type="binding site" evidence="1">
    <location>
        <position position="78"/>
    </location>
    <ligand>
        <name>Zn(2+)</name>
        <dbReference type="ChEBI" id="CHEBI:29105"/>
        <label>1</label>
    </ligand>
</feature>
<feature type="binding site" evidence="1">
    <location>
        <position position="140"/>
    </location>
    <ligand>
        <name>Zn(2+)</name>
        <dbReference type="ChEBI" id="CHEBI:29105"/>
        <label>1</label>
    </ligand>
</feature>
<feature type="binding site" evidence="1">
    <location>
        <position position="140"/>
    </location>
    <ligand>
        <name>Zn(2+)</name>
        <dbReference type="ChEBI" id="CHEBI:29105"/>
        <label>2</label>
    </ligand>
</feature>
<feature type="binding site" evidence="1">
    <location>
        <position position="174"/>
    </location>
    <ligand>
        <name>Zn(2+)</name>
        <dbReference type="ChEBI" id="CHEBI:29105"/>
        <label>2</label>
    </ligand>
</feature>
<feature type="binding site" evidence="1">
    <location>
        <position position="196"/>
    </location>
    <ligand>
        <name>Zn(2+)</name>
        <dbReference type="ChEBI" id="CHEBI:29105"/>
        <label>1</label>
    </ligand>
</feature>
<feature type="binding site" evidence="1">
    <location>
        <position position="379"/>
    </location>
    <ligand>
        <name>Zn(2+)</name>
        <dbReference type="ChEBI" id="CHEBI:29105"/>
        <label>2</label>
    </ligand>
</feature>
<comment type="function">
    <text evidence="1">Cleaves the N-terminal amino acid of tripeptides.</text>
</comment>
<comment type="catalytic activity">
    <reaction evidence="1">
        <text>Release of the N-terminal residue from a tripeptide.</text>
        <dbReference type="EC" id="3.4.11.4"/>
    </reaction>
</comment>
<comment type="cofactor">
    <cofactor evidence="1">
        <name>Zn(2+)</name>
        <dbReference type="ChEBI" id="CHEBI:29105"/>
    </cofactor>
    <text evidence="1">Binds 2 Zn(2+) ions per subunit.</text>
</comment>
<comment type="subcellular location">
    <subcellularLocation>
        <location evidence="1">Cytoplasm</location>
    </subcellularLocation>
</comment>
<comment type="similarity">
    <text evidence="1">Belongs to the peptidase M20B family.</text>
</comment>
<accession>Q83RR6</accession>
<accession>Q7UCV8</accession>
<organism>
    <name type="scientific">Shigella flexneri</name>
    <dbReference type="NCBI Taxonomy" id="623"/>
    <lineage>
        <taxon>Bacteria</taxon>
        <taxon>Pseudomonadati</taxon>
        <taxon>Pseudomonadota</taxon>
        <taxon>Gammaproteobacteria</taxon>
        <taxon>Enterobacterales</taxon>
        <taxon>Enterobacteriaceae</taxon>
        <taxon>Shigella</taxon>
    </lineage>
</organism>
<sequence length="408" mass="44921">MDKLLERFLNYVSLDTQSKAGVRQVPSTEGQWKLLHLLKEQLEEMGLINVTLSEKGTLMATLPANVPGDIPAIGFISHVDTSPDCSGKNVNPQIVENYRGGDIALGIGDEVLSPVMFPVLHQLLGQTLITTDGKTLLGADDKAGIAEIMTALAVLQQKNIPHGDIRVAFTPDEEVGKGAKHFDVDAFDARWAYTVDGGGVGELEFENFNAASVNIKIVGNNVHPGTAKGVMVNALSLAARIHAEVPADESPEMTEGYEGFYHLASMKGTVERADMHYIIRDFDRKQFEARKRKMMEIAKKVGKGLHPDCYIELVIEDSYYNMREKVVEHPHILDIAQQAMRDCDIEPELKPIRGGTDGAQLSFMGLPCPNLFTGGYNYHGKHEFVILEGMEKAVQVIVRIAELTAQRK</sequence>